<evidence type="ECO:0000255" key="1">
    <source>
        <dbReference type="HAMAP-Rule" id="MF_01210"/>
    </source>
</evidence>
<accession>Q8DZQ7</accession>
<reference key="1">
    <citation type="journal article" date="2002" name="Proc. Natl. Acad. Sci. U.S.A.">
        <title>Complete genome sequence and comparative genomic analysis of an emerging human pathogen, serotype V Streptococcus agalactiae.</title>
        <authorList>
            <person name="Tettelin H."/>
            <person name="Masignani V."/>
            <person name="Cieslewicz M.J."/>
            <person name="Eisen J.A."/>
            <person name="Peterson S.N."/>
            <person name="Wessels M.R."/>
            <person name="Paulsen I.T."/>
            <person name="Nelson K.E."/>
            <person name="Margarit I."/>
            <person name="Read T.D."/>
            <person name="Madoff L.C."/>
            <person name="Wolf A.M."/>
            <person name="Beanan M.J."/>
            <person name="Brinkac L.M."/>
            <person name="Daugherty S.C."/>
            <person name="DeBoy R.T."/>
            <person name="Durkin A.S."/>
            <person name="Kolonay J.F."/>
            <person name="Madupu R."/>
            <person name="Lewis M.R."/>
            <person name="Radune D."/>
            <person name="Fedorova N.B."/>
            <person name="Scanlan D."/>
            <person name="Khouri H.M."/>
            <person name="Mulligan S."/>
            <person name="Carty H.A."/>
            <person name="Cline R.T."/>
            <person name="Van Aken S.E."/>
            <person name="Gill J."/>
            <person name="Scarselli M."/>
            <person name="Mora M."/>
            <person name="Iacobini E.T."/>
            <person name="Brettoni C."/>
            <person name="Galli G."/>
            <person name="Mariani M."/>
            <person name="Vegni F."/>
            <person name="Maione D."/>
            <person name="Rinaudo D."/>
            <person name="Rappuoli R."/>
            <person name="Telford J.L."/>
            <person name="Kasper D.L."/>
            <person name="Grandi G."/>
            <person name="Fraser C.M."/>
        </authorList>
    </citation>
    <scope>NUCLEOTIDE SEQUENCE [LARGE SCALE GENOMIC DNA]</scope>
    <source>
        <strain>ATCC BAA-611 / 2603 V/R</strain>
    </source>
</reference>
<comment type="function">
    <text evidence="1">Large subunit of the glutamine-dependent carbamoyl phosphate synthetase (CPSase). CPSase catalyzes the formation of carbamoyl phosphate from the ammonia moiety of glutamine, carbonate, and phosphate donated by ATP, constituting the first step of 2 biosynthetic pathways, one leading to arginine and/or urea and the other to pyrimidine nucleotides. The large subunit (synthetase) binds the substrates ammonia (free or transferred from glutamine from the small subunit), hydrogencarbonate and ATP and carries out an ATP-coupled ligase reaction, activating hydrogencarbonate by forming carboxy phosphate which reacts with ammonia to form carbamoyl phosphate.</text>
</comment>
<comment type="catalytic activity">
    <reaction evidence="1">
        <text>hydrogencarbonate + L-glutamine + 2 ATP + H2O = carbamoyl phosphate + L-glutamate + 2 ADP + phosphate + 2 H(+)</text>
        <dbReference type="Rhea" id="RHEA:18633"/>
        <dbReference type="ChEBI" id="CHEBI:15377"/>
        <dbReference type="ChEBI" id="CHEBI:15378"/>
        <dbReference type="ChEBI" id="CHEBI:17544"/>
        <dbReference type="ChEBI" id="CHEBI:29985"/>
        <dbReference type="ChEBI" id="CHEBI:30616"/>
        <dbReference type="ChEBI" id="CHEBI:43474"/>
        <dbReference type="ChEBI" id="CHEBI:58228"/>
        <dbReference type="ChEBI" id="CHEBI:58359"/>
        <dbReference type="ChEBI" id="CHEBI:456216"/>
        <dbReference type="EC" id="6.3.5.5"/>
    </reaction>
</comment>
<comment type="catalytic activity">
    <molecule>Carbamoyl phosphate synthase large chain</molecule>
    <reaction evidence="1">
        <text>hydrogencarbonate + NH4(+) + 2 ATP = carbamoyl phosphate + 2 ADP + phosphate + 2 H(+)</text>
        <dbReference type="Rhea" id="RHEA:18029"/>
        <dbReference type="ChEBI" id="CHEBI:15378"/>
        <dbReference type="ChEBI" id="CHEBI:17544"/>
        <dbReference type="ChEBI" id="CHEBI:28938"/>
        <dbReference type="ChEBI" id="CHEBI:30616"/>
        <dbReference type="ChEBI" id="CHEBI:43474"/>
        <dbReference type="ChEBI" id="CHEBI:58228"/>
        <dbReference type="ChEBI" id="CHEBI:456216"/>
        <dbReference type="EC" id="6.3.4.16"/>
    </reaction>
</comment>
<comment type="cofactor">
    <cofactor evidence="1">
        <name>Mg(2+)</name>
        <dbReference type="ChEBI" id="CHEBI:18420"/>
    </cofactor>
    <cofactor evidence="1">
        <name>Mn(2+)</name>
        <dbReference type="ChEBI" id="CHEBI:29035"/>
    </cofactor>
    <text evidence="1">Binds 4 Mg(2+) or Mn(2+) ions per subunit.</text>
</comment>
<comment type="pathway">
    <text evidence="1">Amino-acid biosynthesis; L-arginine biosynthesis; carbamoyl phosphate from bicarbonate: step 1/1.</text>
</comment>
<comment type="pathway">
    <text evidence="1">Pyrimidine metabolism; UMP biosynthesis via de novo pathway; (S)-dihydroorotate from bicarbonate: step 1/3.</text>
</comment>
<comment type="subunit">
    <text evidence="1">Composed of two chains; the small (or glutamine) chain promotes the hydrolysis of glutamine to ammonia, which is used by the large (or ammonia) chain to synthesize carbamoyl phosphate. Tetramer of heterodimers (alpha,beta)4.</text>
</comment>
<comment type="domain">
    <text evidence="1">The large subunit is composed of 2 ATP-grasp domains that are involved in binding the 2 ATP molecules needed for carbamoyl phosphate synthesis. The N-terminal ATP-grasp domain (referred to as the carboxyphosphate synthetic component) catalyzes the ATP-dependent phosphorylation of hydrogencarbonate to carboxyphosphate and the subsequent nucleophilic attack by ammonia to form a carbamate intermediate. The C-terminal ATP-grasp domain (referred to as the carbamoyl phosphate synthetic component) then catalyzes the phosphorylation of carbamate with the second ATP to form the end product carbamoyl phosphate. The reactive and unstable enzyme intermediates are sequentially channeled from one active site to the next through the interior of the protein over a distance of at least 96 A.</text>
</comment>
<comment type="similarity">
    <text evidence="1">Belongs to the CarB family.</text>
</comment>
<protein>
    <recommendedName>
        <fullName evidence="1">Carbamoyl phosphate synthase large chain</fullName>
        <ecNumber evidence="1">6.3.4.16</ecNumber>
        <ecNumber evidence="1">6.3.5.5</ecNumber>
    </recommendedName>
    <alternativeName>
        <fullName evidence="1">Carbamoyl phosphate synthetase ammonia chain</fullName>
    </alternativeName>
</protein>
<proteinExistence type="inferred from homology"/>
<feature type="chain" id="PRO_0000145048" description="Carbamoyl phosphate synthase large chain">
    <location>
        <begin position="1"/>
        <end position="1060"/>
    </location>
</feature>
<feature type="domain" description="ATP-grasp 1" evidence="1">
    <location>
        <begin position="133"/>
        <end position="327"/>
    </location>
</feature>
<feature type="domain" description="ATP-grasp 2" evidence="1">
    <location>
        <begin position="671"/>
        <end position="861"/>
    </location>
</feature>
<feature type="domain" description="MGS-like" evidence="1">
    <location>
        <begin position="930"/>
        <end position="1060"/>
    </location>
</feature>
<feature type="region of interest" description="Carboxyphosphate synthetic domain" evidence="1">
    <location>
        <begin position="1"/>
        <end position="401"/>
    </location>
</feature>
<feature type="region of interest" description="Oligomerization domain" evidence="1">
    <location>
        <begin position="402"/>
        <end position="546"/>
    </location>
</feature>
<feature type="region of interest" description="Carbamoyl phosphate synthetic domain" evidence="1">
    <location>
        <begin position="547"/>
        <end position="929"/>
    </location>
</feature>
<feature type="region of interest" description="Allosteric domain" evidence="1">
    <location>
        <begin position="930"/>
        <end position="1060"/>
    </location>
</feature>
<feature type="binding site" evidence="1">
    <location>
        <position position="129"/>
    </location>
    <ligand>
        <name>ATP</name>
        <dbReference type="ChEBI" id="CHEBI:30616"/>
        <label>1</label>
    </ligand>
</feature>
<feature type="binding site" evidence="1">
    <location>
        <position position="169"/>
    </location>
    <ligand>
        <name>ATP</name>
        <dbReference type="ChEBI" id="CHEBI:30616"/>
        <label>1</label>
    </ligand>
</feature>
<feature type="binding site" evidence="1">
    <location>
        <position position="175"/>
    </location>
    <ligand>
        <name>ATP</name>
        <dbReference type="ChEBI" id="CHEBI:30616"/>
        <label>1</label>
    </ligand>
</feature>
<feature type="binding site" evidence="1">
    <location>
        <position position="176"/>
    </location>
    <ligand>
        <name>ATP</name>
        <dbReference type="ChEBI" id="CHEBI:30616"/>
        <label>1</label>
    </ligand>
</feature>
<feature type="binding site" evidence="1">
    <location>
        <position position="208"/>
    </location>
    <ligand>
        <name>ATP</name>
        <dbReference type="ChEBI" id="CHEBI:30616"/>
        <label>1</label>
    </ligand>
</feature>
<feature type="binding site" evidence="1">
    <location>
        <position position="210"/>
    </location>
    <ligand>
        <name>ATP</name>
        <dbReference type="ChEBI" id="CHEBI:30616"/>
        <label>1</label>
    </ligand>
</feature>
<feature type="binding site" evidence="1">
    <location>
        <position position="215"/>
    </location>
    <ligand>
        <name>ATP</name>
        <dbReference type="ChEBI" id="CHEBI:30616"/>
        <label>1</label>
    </ligand>
</feature>
<feature type="binding site" evidence="1">
    <location>
        <position position="241"/>
    </location>
    <ligand>
        <name>ATP</name>
        <dbReference type="ChEBI" id="CHEBI:30616"/>
        <label>1</label>
    </ligand>
</feature>
<feature type="binding site" evidence="1">
    <location>
        <position position="242"/>
    </location>
    <ligand>
        <name>ATP</name>
        <dbReference type="ChEBI" id="CHEBI:30616"/>
        <label>1</label>
    </ligand>
</feature>
<feature type="binding site" evidence="1">
    <location>
        <position position="243"/>
    </location>
    <ligand>
        <name>ATP</name>
        <dbReference type="ChEBI" id="CHEBI:30616"/>
        <label>1</label>
    </ligand>
</feature>
<feature type="binding site" evidence="1">
    <location>
        <position position="284"/>
    </location>
    <ligand>
        <name>ATP</name>
        <dbReference type="ChEBI" id="CHEBI:30616"/>
        <label>1</label>
    </ligand>
</feature>
<feature type="binding site" evidence="1">
    <location>
        <position position="284"/>
    </location>
    <ligand>
        <name>Mg(2+)</name>
        <dbReference type="ChEBI" id="CHEBI:18420"/>
        <label>1</label>
    </ligand>
</feature>
<feature type="binding site" evidence="1">
    <location>
        <position position="284"/>
    </location>
    <ligand>
        <name>Mn(2+)</name>
        <dbReference type="ChEBI" id="CHEBI:29035"/>
        <label>1</label>
    </ligand>
</feature>
<feature type="binding site" evidence="1">
    <location>
        <position position="298"/>
    </location>
    <ligand>
        <name>ATP</name>
        <dbReference type="ChEBI" id="CHEBI:30616"/>
        <label>1</label>
    </ligand>
</feature>
<feature type="binding site" evidence="1">
    <location>
        <position position="298"/>
    </location>
    <ligand>
        <name>Mg(2+)</name>
        <dbReference type="ChEBI" id="CHEBI:18420"/>
        <label>1</label>
    </ligand>
</feature>
<feature type="binding site" evidence="1">
    <location>
        <position position="298"/>
    </location>
    <ligand>
        <name>Mg(2+)</name>
        <dbReference type="ChEBI" id="CHEBI:18420"/>
        <label>2</label>
    </ligand>
</feature>
<feature type="binding site" evidence="1">
    <location>
        <position position="298"/>
    </location>
    <ligand>
        <name>Mn(2+)</name>
        <dbReference type="ChEBI" id="CHEBI:29035"/>
        <label>1</label>
    </ligand>
</feature>
<feature type="binding site" evidence="1">
    <location>
        <position position="298"/>
    </location>
    <ligand>
        <name>Mn(2+)</name>
        <dbReference type="ChEBI" id="CHEBI:29035"/>
        <label>2</label>
    </ligand>
</feature>
<feature type="binding site" evidence="1">
    <location>
        <position position="300"/>
    </location>
    <ligand>
        <name>Mg(2+)</name>
        <dbReference type="ChEBI" id="CHEBI:18420"/>
        <label>2</label>
    </ligand>
</feature>
<feature type="binding site" evidence="1">
    <location>
        <position position="300"/>
    </location>
    <ligand>
        <name>Mn(2+)</name>
        <dbReference type="ChEBI" id="CHEBI:29035"/>
        <label>2</label>
    </ligand>
</feature>
<feature type="binding site" evidence="1">
    <location>
        <position position="707"/>
    </location>
    <ligand>
        <name>ATP</name>
        <dbReference type="ChEBI" id="CHEBI:30616"/>
        <label>2</label>
    </ligand>
</feature>
<feature type="binding site" evidence="1">
    <location>
        <position position="746"/>
    </location>
    <ligand>
        <name>ATP</name>
        <dbReference type="ChEBI" id="CHEBI:30616"/>
        <label>2</label>
    </ligand>
</feature>
<feature type="binding site" evidence="1">
    <location>
        <position position="748"/>
    </location>
    <ligand>
        <name>ATP</name>
        <dbReference type="ChEBI" id="CHEBI:30616"/>
        <label>2</label>
    </ligand>
</feature>
<feature type="binding site" evidence="1">
    <location>
        <position position="752"/>
    </location>
    <ligand>
        <name>ATP</name>
        <dbReference type="ChEBI" id="CHEBI:30616"/>
        <label>2</label>
    </ligand>
</feature>
<feature type="binding site" evidence="1">
    <location>
        <position position="777"/>
    </location>
    <ligand>
        <name>ATP</name>
        <dbReference type="ChEBI" id="CHEBI:30616"/>
        <label>2</label>
    </ligand>
</feature>
<feature type="binding site" evidence="1">
    <location>
        <position position="778"/>
    </location>
    <ligand>
        <name>ATP</name>
        <dbReference type="ChEBI" id="CHEBI:30616"/>
        <label>2</label>
    </ligand>
</feature>
<feature type="binding site" evidence="1">
    <location>
        <position position="779"/>
    </location>
    <ligand>
        <name>ATP</name>
        <dbReference type="ChEBI" id="CHEBI:30616"/>
        <label>2</label>
    </ligand>
</feature>
<feature type="binding site" evidence="1">
    <location>
        <position position="780"/>
    </location>
    <ligand>
        <name>ATP</name>
        <dbReference type="ChEBI" id="CHEBI:30616"/>
        <label>2</label>
    </ligand>
</feature>
<feature type="binding site" evidence="1">
    <location>
        <position position="820"/>
    </location>
    <ligand>
        <name>ATP</name>
        <dbReference type="ChEBI" id="CHEBI:30616"/>
        <label>2</label>
    </ligand>
</feature>
<feature type="binding site" evidence="1">
    <location>
        <position position="820"/>
    </location>
    <ligand>
        <name>Mg(2+)</name>
        <dbReference type="ChEBI" id="CHEBI:18420"/>
        <label>3</label>
    </ligand>
</feature>
<feature type="binding site" evidence="1">
    <location>
        <position position="820"/>
    </location>
    <ligand>
        <name>Mn(2+)</name>
        <dbReference type="ChEBI" id="CHEBI:29035"/>
        <label>3</label>
    </ligand>
</feature>
<feature type="binding site" evidence="1">
    <location>
        <position position="832"/>
    </location>
    <ligand>
        <name>ATP</name>
        <dbReference type="ChEBI" id="CHEBI:30616"/>
        <label>2</label>
    </ligand>
</feature>
<feature type="binding site" evidence="1">
    <location>
        <position position="832"/>
    </location>
    <ligand>
        <name>Mg(2+)</name>
        <dbReference type="ChEBI" id="CHEBI:18420"/>
        <label>3</label>
    </ligand>
</feature>
<feature type="binding site" evidence="1">
    <location>
        <position position="832"/>
    </location>
    <ligand>
        <name>Mg(2+)</name>
        <dbReference type="ChEBI" id="CHEBI:18420"/>
        <label>4</label>
    </ligand>
</feature>
<feature type="binding site" evidence="1">
    <location>
        <position position="832"/>
    </location>
    <ligand>
        <name>Mn(2+)</name>
        <dbReference type="ChEBI" id="CHEBI:29035"/>
        <label>3</label>
    </ligand>
</feature>
<feature type="binding site" evidence="1">
    <location>
        <position position="832"/>
    </location>
    <ligand>
        <name>Mn(2+)</name>
        <dbReference type="ChEBI" id="CHEBI:29035"/>
        <label>4</label>
    </ligand>
</feature>
<feature type="binding site" evidence="1">
    <location>
        <position position="834"/>
    </location>
    <ligand>
        <name>Mg(2+)</name>
        <dbReference type="ChEBI" id="CHEBI:18420"/>
        <label>4</label>
    </ligand>
</feature>
<feature type="binding site" evidence="1">
    <location>
        <position position="834"/>
    </location>
    <ligand>
        <name>Mn(2+)</name>
        <dbReference type="ChEBI" id="CHEBI:29035"/>
        <label>4</label>
    </ligand>
</feature>
<name>CARB_STRA5</name>
<sequence>MPKRTDIRKIMVIGSGPIVIGQAAEFDYSGTQACLSLKEEGYQVVLVNSNPATIMTDKDIADKVYIEPITLEFVTRILRKERPDALLPTLGGQTGLNMAMALSKNGILEELNVELLGTKLSAIDKAEDRDLFKQLMEELNQPIPESEIVNSVEEAIQFAEQIGYPLIVRPAFTLGGTGGGMCDNQEQLVDITTKGLKLSPVTQCLIERSIAGFKEIEYEVMRDAADNALVVCNMENFDPVGIHTGDSIVFAPAQTLSDVENQLLRDASLDIIRALKIEGGCNVQLALDPNSFKYYVIEVNPRVSRSSALASKATGYPIAKLAAKIAVGLTLDEVINPITKTTYAMFEPALDYVVAKMPRFPFDKFESGDRKLGTQMKATGEVMAIGRNIEESLLKACRSLEIGVDHIKIADLDNVSDDVLLEKIRKAEDDRLFYLAEALRRHYSIEKLASLTSIDSFFLDKLRVIVELEDLLSKNRLDINILKKVKNKGFSDKAIASLWQINEDQVRNMRKEAGILPVYKMVDTCASEFDSATPYFYSTYAVENESLISDKASILVLGSGPIRIGQGVEFDYATVHSVKAIRESGFEAIIMNSNPETVSTDFSISDKLYFEPLTFEDVMNVIDLEKPEGVILQFGGQTAINLAKDLNKAGVKILGTQLEDLDRAENRKQFEATLQALNIPQPPGFTATTEEEAVNAAQKIGYPVLVRPSYVLGGRAMKIVENEEDLRHYMTTAVKASPDHPVLIDAYLIGKECEVDAISDGQNILIPGIMEHIERSGVHSGDSMAVYPPQTLSETIIETIVDYTKRLAIGLNCIGMMNIQFVIKDQKVYVIEVNPRASRTLPFLSKVTHIPMAQVATKVILGDKLCNFTYGYDLYPASDMVHIKAPVFSFTKLAKVDSLLGPEMKSTGEVMGSDINLQKALYKAFEAAYLHMPDYGNIVFTVDDTDKEEALELAKVYQSIGYRIYATQGTAIYFDANGLETVLVGKLGENDRNHIPDLIKNGKIQAVINTVGQNNIDNHDALIIRRSAIEQGVPLFTSLDTAHAMFKVLESRAFTLKVLD</sequence>
<dbReference type="EC" id="6.3.4.16" evidence="1"/>
<dbReference type="EC" id="6.3.5.5" evidence="1"/>
<dbReference type="EMBL" id="AE009948">
    <property type="protein sequence ID" value="AAM99924.1"/>
    <property type="molecule type" value="Genomic_DNA"/>
</dbReference>
<dbReference type="RefSeq" id="NP_688052.1">
    <property type="nucleotide sequence ID" value="NC_004116.1"/>
</dbReference>
<dbReference type="RefSeq" id="WP_001126466.1">
    <property type="nucleotide sequence ID" value="NC_004116.1"/>
</dbReference>
<dbReference type="SMR" id="Q8DZQ7"/>
<dbReference type="STRING" id="208435.SAG1042"/>
<dbReference type="KEGG" id="sag:SAG1042"/>
<dbReference type="PATRIC" id="fig|208435.3.peg.1053"/>
<dbReference type="HOGENOM" id="CLU_000513_1_2_9"/>
<dbReference type="OrthoDB" id="9804197at2"/>
<dbReference type="UniPathway" id="UPA00068">
    <property type="reaction ID" value="UER00171"/>
</dbReference>
<dbReference type="UniPathway" id="UPA00070">
    <property type="reaction ID" value="UER00115"/>
</dbReference>
<dbReference type="Proteomes" id="UP000000821">
    <property type="component" value="Chromosome"/>
</dbReference>
<dbReference type="GO" id="GO:0005737">
    <property type="term" value="C:cytoplasm"/>
    <property type="evidence" value="ECO:0007669"/>
    <property type="project" value="TreeGrafter"/>
</dbReference>
<dbReference type="GO" id="GO:0005524">
    <property type="term" value="F:ATP binding"/>
    <property type="evidence" value="ECO:0007669"/>
    <property type="project" value="UniProtKB-UniRule"/>
</dbReference>
<dbReference type="GO" id="GO:0004087">
    <property type="term" value="F:carbamoyl-phosphate synthase (ammonia) activity"/>
    <property type="evidence" value="ECO:0007669"/>
    <property type="project" value="RHEA"/>
</dbReference>
<dbReference type="GO" id="GO:0004088">
    <property type="term" value="F:carbamoyl-phosphate synthase (glutamine-hydrolyzing) activity"/>
    <property type="evidence" value="ECO:0007669"/>
    <property type="project" value="UniProtKB-UniRule"/>
</dbReference>
<dbReference type="GO" id="GO:0046872">
    <property type="term" value="F:metal ion binding"/>
    <property type="evidence" value="ECO:0007669"/>
    <property type="project" value="UniProtKB-KW"/>
</dbReference>
<dbReference type="GO" id="GO:0044205">
    <property type="term" value="P:'de novo' UMP biosynthetic process"/>
    <property type="evidence" value="ECO:0007669"/>
    <property type="project" value="UniProtKB-UniRule"/>
</dbReference>
<dbReference type="GO" id="GO:0006541">
    <property type="term" value="P:glutamine metabolic process"/>
    <property type="evidence" value="ECO:0007669"/>
    <property type="project" value="TreeGrafter"/>
</dbReference>
<dbReference type="GO" id="GO:0006526">
    <property type="term" value="P:L-arginine biosynthetic process"/>
    <property type="evidence" value="ECO:0007669"/>
    <property type="project" value="UniProtKB-UniRule"/>
</dbReference>
<dbReference type="CDD" id="cd01424">
    <property type="entry name" value="MGS_CPS_II"/>
    <property type="match status" value="1"/>
</dbReference>
<dbReference type="FunFam" id="1.10.1030.10:FF:000002">
    <property type="entry name" value="Carbamoyl-phosphate synthase large chain"/>
    <property type="match status" value="1"/>
</dbReference>
<dbReference type="FunFam" id="3.30.1490.20:FF:000001">
    <property type="entry name" value="Carbamoyl-phosphate synthase large chain"/>
    <property type="match status" value="1"/>
</dbReference>
<dbReference type="FunFam" id="3.30.470.20:FF:000001">
    <property type="entry name" value="Carbamoyl-phosphate synthase large chain"/>
    <property type="match status" value="1"/>
</dbReference>
<dbReference type="FunFam" id="3.30.470.20:FF:000026">
    <property type="entry name" value="Carbamoyl-phosphate synthase large chain"/>
    <property type="match status" value="1"/>
</dbReference>
<dbReference type="FunFam" id="3.40.50.20:FF:000001">
    <property type="entry name" value="Carbamoyl-phosphate synthase large chain"/>
    <property type="match status" value="2"/>
</dbReference>
<dbReference type="Gene3D" id="3.40.50.20">
    <property type="match status" value="2"/>
</dbReference>
<dbReference type="Gene3D" id="3.30.1490.20">
    <property type="entry name" value="ATP-grasp fold, A domain"/>
    <property type="match status" value="1"/>
</dbReference>
<dbReference type="Gene3D" id="3.30.470.20">
    <property type="entry name" value="ATP-grasp fold, B domain"/>
    <property type="match status" value="2"/>
</dbReference>
<dbReference type="Gene3D" id="1.10.1030.10">
    <property type="entry name" value="Carbamoyl-phosphate synthetase, large subunit oligomerisation domain"/>
    <property type="match status" value="1"/>
</dbReference>
<dbReference type="Gene3D" id="3.40.50.1380">
    <property type="entry name" value="Methylglyoxal synthase-like domain"/>
    <property type="match status" value="1"/>
</dbReference>
<dbReference type="HAMAP" id="MF_01210_A">
    <property type="entry name" value="CPSase_L_chain_A"/>
    <property type="match status" value="1"/>
</dbReference>
<dbReference type="HAMAP" id="MF_01210_B">
    <property type="entry name" value="CPSase_L_chain_B"/>
    <property type="match status" value="1"/>
</dbReference>
<dbReference type="InterPro" id="IPR011761">
    <property type="entry name" value="ATP-grasp"/>
</dbReference>
<dbReference type="InterPro" id="IPR013815">
    <property type="entry name" value="ATP_grasp_subdomain_1"/>
</dbReference>
<dbReference type="InterPro" id="IPR006275">
    <property type="entry name" value="CarbamoylP_synth_lsu"/>
</dbReference>
<dbReference type="InterPro" id="IPR005480">
    <property type="entry name" value="CarbamoylP_synth_lsu_oligo"/>
</dbReference>
<dbReference type="InterPro" id="IPR036897">
    <property type="entry name" value="CarbamoylP_synth_lsu_oligo_sf"/>
</dbReference>
<dbReference type="InterPro" id="IPR005479">
    <property type="entry name" value="CbamoylP_synth_lsu-like_ATP-bd"/>
</dbReference>
<dbReference type="InterPro" id="IPR005483">
    <property type="entry name" value="CbamoylP_synth_lsu_CPSase_dom"/>
</dbReference>
<dbReference type="InterPro" id="IPR011607">
    <property type="entry name" value="MGS-like_dom"/>
</dbReference>
<dbReference type="InterPro" id="IPR036914">
    <property type="entry name" value="MGS-like_dom_sf"/>
</dbReference>
<dbReference type="InterPro" id="IPR033937">
    <property type="entry name" value="MGS_CPS_CarB"/>
</dbReference>
<dbReference type="InterPro" id="IPR016185">
    <property type="entry name" value="PreATP-grasp_dom_sf"/>
</dbReference>
<dbReference type="NCBIfam" id="TIGR01369">
    <property type="entry name" value="CPSaseII_lrg"/>
    <property type="match status" value="1"/>
</dbReference>
<dbReference type="NCBIfam" id="NF003671">
    <property type="entry name" value="PRK05294.1"/>
    <property type="match status" value="1"/>
</dbReference>
<dbReference type="NCBIfam" id="NF009455">
    <property type="entry name" value="PRK12815.1"/>
    <property type="match status" value="1"/>
</dbReference>
<dbReference type="PANTHER" id="PTHR11405:SF53">
    <property type="entry name" value="CARBAMOYL-PHOSPHATE SYNTHASE [AMMONIA], MITOCHONDRIAL"/>
    <property type="match status" value="1"/>
</dbReference>
<dbReference type="PANTHER" id="PTHR11405">
    <property type="entry name" value="CARBAMOYLTRANSFERASE FAMILY MEMBER"/>
    <property type="match status" value="1"/>
</dbReference>
<dbReference type="Pfam" id="PF02786">
    <property type="entry name" value="CPSase_L_D2"/>
    <property type="match status" value="2"/>
</dbReference>
<dbReference type="Pfam" id="PF02787">
    <property type="entry name" value="CPSase_L_D3"/>
    <property type="match status" value="1"/>
</dbReference>
<dbReference type="Pfam" id="PF02142">
    <property type="entry name" value="MGS"/>
    <property type="match status" value="1"/>
</dbReference>
<dbReference type="PRINTS" id="PR00098">
    <property type="entry name" value="CPSASE"/>
</dbReference>
<dbReference type="SMART" id="SM01096">
    <property type="entry name" value="CPSase_L_D3"/>
    <property type="match status" value="1"/>
</dbReference>
<dbReference type="SMART" id="SM01209">
    <property type="entry name" value="GARS_A"/>
    <property type="match status" value="1"/>
</dbReference>
<dbReference type="SMART" id="SM00851">
    <property type="entry name" value="MGS"/>
    <property type="match status" value="1"/>
</dbReference>
<dbReference type="SUPFAM" id="SSF48108">
    <property type="entry name" value="Carbamoyl phosphate synthetase, large subunit connection domain"/>
    <property type="match status" value="1"/>
</dbReference>
<dbReference type="SUPFAM" id="SSF56059">
    <property type="entry name" value="Glutathione synthetase ATP-binding domain-like"/>
    <property type="match status" value="2"/>
</dbReference>
<dbReference type="SUPFAM" id="SSF52335">
    <property type="entry name" value="Methylglyoxal synthase-like"/>
    <property type="match status" value="1"/>
</dbReference>
<dbReference type="SUPFAM" id="SSF52440">
    <property type="entry name" value="PreATP-grasp domain"/>
    <property type="match status" value="2"/>
</dbReference>
<dbReference type="PROSITE" id="PS50975">
    <property type="entry name" value="ATP_GRASP"/>
    <property type="match status" value="2"/>
</dbReference>
<dbReference type="PROSITE" id="PS00866">
    <property type="entry name" value="CPSASE_1"/>
    <property type="match status" value="2"/>
</dbReference>
<dbReference type="PROSITE" id="PS00867">
    <property type="entry name" value="CPSASE_2"/>
    <property type="match status" value="2"/>
</dbReference>
<dbReference type="PROSITE" id="PS51855">
    <property type="entry name" value="MGS"/>
    <property type="match status" value="1"/>
</dbReference>
<gene>
    <name evidence="1" type="primary">carB</name>
    <name type="ordered locus">SAG1042</name>
</gene>
<organism>
    <name type="scientific">Streptococcus agalactiae serotype V (strain ATCC BAA-611 / 2603 V/R)</name>
    <dbReference type="NCBI Taxonomy" id="208435"/>
    <lineage>
        <taxon>Bacteria</taxon>
        <taxon>Bacillati</taxon>
        <taxon>Bacillota</taxon>
        <taxon>Bacilli</taxon>
        <taxon>Lactobacillales</taxon>
        <taxon>Streptococcaceae</taxon>
        <taxon>Streptococcus</taxon>
    </lineage>
</organism>
<keyword id="KW-0028">Amino-acid biosynthesis</keyword>
<keyword id="KW-0055">Arginine biosynthesis</keyword>
<keyword id="KW-0067">ATP-binding</keyword>
<keyword id="KW-0436">Ligase</keyword>
<keyword id="KW-0460">Magnesium</keyword>
<keyword id="KW-0464">Manganese</keyword>
<keyword id="KW-0479">Metal-binding</keyword>
<keyword id="KW-0547">Nucleotide-binding</keyword>
<keyword id="KW-0665">Pyrimidine biosynthesis</keyword>
<keyword id="KW-1185">Reference proteome</keyword>
<keyword id="KW-0677">Repeat</keyword>